<keyword id="KW-0963">Cytoplasm</keyword>
<keyword id="KW-0489">Methyltransferase</keyword>
<keyword id="KW-1185">Reference proteome</keyword>
<keyword id="KW-0698">rRNA processing</keyword>
<keyword id="KW-0949">S-adenosyl-L-methionine</keyword>
<keyword id="KW-0808">Transferase</keyword>
<evidence type="ECO:0000255" key="1">
    <source>
        <dbReference type="HAMAP-Rule" id="MF_01007"/>
    </source>
</evidence>
<sequence>MNATYRHITVLLEEAVSALAPREDGCYLDGTFGRGGHSRALLEKLGAGGRLLGFDKDPQAIQTGKALAAEDGRFVIVQRSFAELGDEVRARGLEGRVDGVLLDLGVSSPQLDDPERGFSFLNDGPLDMRMNPGQGISAAEFIANATEEEIARVFKEYGEERFAKRMARAIVQRRQERPFERTADLAEVITVANPAWEKGKNPATRAFQGLRIHVNNELGDLERGLDAALESLAVGGRLVVISFHSLEDRIVKLFMRKHAKGEADNLPRDLPIRSKVFEPRLKLLGKPQYASEEELKANPRSRSAVMRVAEKLR</sequence>
<feature type="chain" id="PRO_0000108685" description="Ribosomal RNA small subunit methyltransferase H">
    <location>
        <begin position="1"/>
        <end position="313"/>
    </location>
</feature>
<feature type="binding site" evidence="1">
    <location>
        <begin position="35"/>
        <end position="37"/>
    </location>
    <ligand>
        <name>S-adenosyl-L-methionine</name>
        <dbReference type="ChEBI" id="CHEBI:59789"/>
    </ligand>
</feature>
<feature type="binding site" evidence="1">
    <location>
        <position position="55"/>
    </location>
    <ligand>
        <name>S-adenosyl-L-methionine</name>
        <dbReference type="ChEBI" id="CHEBI:59789"/>
    </ligand>
</feature>
<feature type="binding site" evidence="1">
    <location>
        <position position="81"/>
    </location>
    <ligand>
        <name>S-adenosyl-L-methionine</name>
        <dbReference type="ChEBI" id="CHEBI:59789"/>
    </ligand>
</feature>
<feature type="binding site" evidence="1">
    <location>
        <position position="103"/>
    </location>
    <ligand>
        <name>S-adenosyl-L-methionine</name>
        <dbReference type="ChEBI" id="CHEBI:59789"/>
    </ligand>
</feature>
<feature type="binding site" evidence="1">
    <location>
        <position position="110"/>
    </location>
    <ligand>
        <name>S-adenosyl-L-methionine</name>
        <dbReference type="ChEBI" id="CHEBI:59789"/>
    </ligand>
</feature>
<organism>
    <name type="scientific">Pseudomonas aeruginosa (strain ATCC 15692 / DSM 22644 / CIP 104116 / JCM 14847 / LMG 12228 / 1C / PRS 101 / PAO1)</name>
    <dbReference type="NCBI Taxonomy" id="208964"/>
    <lineage>
        <taxon>Bacteria</taxon>
        <taxon>Pseudomonadati</taxon>
        <taxon>Pseudomonadota</taxon>
        <taxon>Gammaproteobacteria</taxon>
        <taxon>Pseudomonadales</taxon>
        <taxon>Pseudomonadaceae</taxon>
        <taxon>Pseudomonas</taxon>
    </lineage>
</organism>
<dbReference type="EC" id="2.1.1.199" evidence="1"/>
<dbReference type="EMBL" id="AE004091">
    <property type="protein sequence ID" value="AAG07808.1"/>
    <property type="molecule type" value="Genomic_DNA"/>
</dbReference>
<dbReference type="PIR" id="E83095">
    <property type="entry name" value="E83095"/>
</dbReference>
<dbReference type="RefSeq" id="NP_253110.1">
    <property type="nucleotide sequence ID" value="NC_002516.2"/>
</dbReference>
<dbReference type="RefSeq" id="WP_003110151.1">
    <property type="nucleotide sequence ID" value="NZ_QZGE01000004.1"/>
</dbReference>
<dbReference type="SMR" id="Q9HVZ5"/>
<dbReference type="FunCoup" id="Q9HVZ5">
    <property type="interactions" value="691"/>
</dbReference>
<dbReference type="STRING" id="208964.PA4420"/>
<dbReference type="PaxDb" id="208964-PA4420"/>
<dbReference type="DNASU" id="881254"/>
<dbReference type="GeneID" id="881254"/>
<dbReference type="KEGG" id="pae:PA4420"/>
<dbReference type="PATRIC" id="fig|208964.12.peg.4629"/>
<dbReference type="PseudoCAP" id="PA4420"/>
<dbReference type="HOGENOM" id="CLU_038422_2_0_6"/>
<dbReference type="InParanoid" id="Q9HVZ5"/>
<dbReference type="OrthoDB" id="9806637at2"/>
<dbReference type="PhylomeDB" id="Q9HVZ5"/>
<dbReference type="BioCyc" id="PAER208964:G1FZ6-4507-MONOMER"/>
<dbReference type="Proteomes" id="UP000002438">
    <property type="component" value="Chromosome"/>
</dbReference>
<dbReference type="GO" id="GO:0005737">
    <property type="term" value="C:cytoplasm"/>
    <property type="evidence" value="ECO:0000318"/>
    <property type="project" value="GO_Central"/>
</dbReference>
<dbReference type="GO" id="GO:0071424">
    <property type="term" value="F:rRNA (cytosine-N4-)-methyltransferase activity"/>
    <property type="evidence" value="ECO:0000318"/>
    <property type="project" value="GO_Central"/>
</dbReference>
<dbReference type="GO" id="GO:0070475">
    <property type="term" value="P:rRNA base methylation"/>
    <property type="evidence" value="ECO:0000318"/>
    <property type="project" value="GO_Central"/>
</dbReference>
<dbReference type="FunFam" id="1.10.150.170:FF:000003">
    <property type="entry name" value="Ribosomal RNA small subunit methyltransferase H"/>
    <property type="match status" value="1"/>
</dbReference>
<dbReference type="Gene3D" id="1.10.150.170">
    <property type="entry name" value="Putative methyltransferase TM0872, insert domain"/>
    <property type="match status" value="1"/>
</dbReference>
<dbReference type="Gene3D" id="3.40.50.150">
    <property type="entry name" value="Vaccinia Virus protein VP39"/>
    <property type="match status" value="1"/>
</dbReference>
<dbReference type="HAMAP" id="MF_01007">
    <property type="entry name" value="16SrRNA_methyltr_H"/>
    <property type="match status" value="1"/>
</dbReference>
<dbReference type="InterPro" id="IPR002903">
    <property type="entry name" value="RsmH"/>
</dbReference>
<dbReference type="InterPro" id="IPR023397">
    <property type="entry name" value="SAM-dep_MeTrfase_MraW_recog"/>
</dbReference>
<dbReference type="InterPro" id="IPR029063">
    <property type="entry name" value="SAM-dependent_MTases_sf"/>
</dbReference>
<dbReference type="NCBIfam" id="TIGR00006">
    <property type="entry name" value="16S rRNA (cytosine(1402)-N(4))-methyltransferase RsmH"/>
    <property type="match status" value="1"/>
</dbReference>
<dbReference type="PANTHER" id="PTHR11265:SF0">
    <property type="entry name" value="12S RRNA N4-METHYLCYTIDINE METHYLTRANSFERASE"/>
    <property type="match status" value="1"/>
</dbReference>
<dbReference type="PANTHER" id="PTHR11265">
    <property type="entry name" value="S-ADENOSYL-METHYLTRANSFERASE MRAW"/>
    <property type="match status" value="1"/>
</dbReference>
<dbReference type="Pfam" id="PF01795">
    <property type="entry name" value="Methyltransf_5"/>
    <property type="match status" value="1"/>
</dbReference>
<dbReference type="PIRSF" id="PIRSF004486">
    <property type="entry name" value="MraW"/>
    <property type="match status" value="1"/>
</dbReference>
<dbReference type="SUPFAM" id="SSF81799">
    <property type="entry name" value="Putative methyltransferase TM0872, insert domain"/>
    <property type="match status" value="1"/>
</dbReference>
<dbReference type="SUPFAM" id="SSF53335">
    <property type="entry name" value="S-adenosyl-L-methionine-dependent methyltransferases"/>
    <property type="match status" value="1"/>
</dbReference>
<comment type="function">
    <text evidence="1">Specifically methylates the N4 position of cytidine in position 1402 (C1402) of 16S rRNA.</text>
</comment>
<comment type="catalytic activity">
    <reaction evidence="1">
        <text>cytidine(1402) in 16S rRNA + S-adenosyl-L-methionine = N(4)-methylcytidine(1402) in 16S rRNA + S-adenosyl-L-homocysteine + H(+)</text>
        <dbReference type="Rhea" id="RHEA:42928"/>
        <dbReference type="Rhea" id="RHEA-COMP:10286"/>
        <dbReference type="Rhea" id="RHEA-COMP:10287"/>
        <dbReference type="ChEBI" id="CHEBI:15378"/>
        <dbReference type="ChEBI" id="CHEBI:57856"/>
        <dbReference type="ChEBI" id="CHEBI:59789"/>
        <dbReference type="ChEBI" id="CHEBI:74506"/>
        <dbReference type="ChEBI" id="CHEBI:82748"/>
        <dbReference type="EC" id="2.1.1.199"/>
    </reaction>
</comment>
<comment type="subcellular location">
    <subcellularLocation>
        <location evidence="1">Cytoplasm</location>
    </subcellularLocation>
</comment>
<comment type="similarity">
    <text evidence="1">Belongs to the methyltransferase superfamily. RsmH family.</text>
</comment>
<protein>
    <recommendedName>
        <fullName evidence="1">Ribosomal RNA small subunit methyltransferase H</fullName>
        <ecNumber evidence="1">2.1.1.199</ecNumber>
    </recommendedName>
    <alternativeName>
        <fullName evidence="1">16S rRNA m(4)C1402 methyltransferase</fullName>
    </alternativeName>
    <alternativeName>
        <fullName evidence="1">rRNA (cytosine-N(4)-)-methyltransferase RsmH</fullName>
    </alternativeName>
</protein>
<reference key="1">
    <citation type="journal article" date="2000" name="Nature">
        <title>Complete genome sequence of Pseudomonas aeruginosa PAO1, an opportunistic pathogen.</title>
        <authorList>
            <person name="Stover C.K."/>
            <person name="Pham X.-Q.T."/>
            <person name="Erwin A.L."/>
            <person name="Mizoguchi S.D."/>
            <person name="Warrener P."/>
            <person name="Hickey M.J."/>
            <person name="Brinkman F.S.L."/>
            <person name="Hufnagle W.O."/>
            <person name="Kowalik D.J."/>
            <person name="Lagrou M."/>
            <person name="Garber R.L."/>
            <person name="Goltry L."/>
            <person name="Tolentino E."/>
            <person name="Westbrock-Wadman S."/>
            <person name="Yuan Y."/>
            <person name="Brody L.L."/>
            <person name="Coulter S.N."/>
            <person name="Folger K.R."/>
            <person name="Kas A."/>
            <person name="Larbig K."/>
            <person name="Lim R.M."/>
            <person name="Smith K.A."/>
            <person name="Spencer D.H."/>
            <person name="Wong G.K.-S."/>
            <person name="Wu Z."/>
            <person name="Paulsen I.T."/>
            <person name="Reizer J."/>
            <person name="Saier M.H. Jr."/>
            <person name="Hancock R.E.W."/>
            <person name="Lory S."/>
            <person name="Olson M.V."/>
        </authorList>
    </citation>
    <scope>NUCLEOTIDE SEQUENCE [LARGE SCALE GENOMIC DNA]</scope>
    <source>
        <strain>ATCC 15692 / DSM 22644 / CIP 104116 / JCM 14847 / LMG 12228 / 1C / PRS 101 / PAO1</strain>
    </source>
</reference>
<name>RSMH_PSEAE</name>
<accession>Q9HVZ5</accession>
<proteinExistence type="inferred from homology"/>
<gene>
    <name evidence="1" type="primary">rsmH</name>
    <name type="synonym">mraW</name>
    <name type="ordered locus">PA4420</name>
</gene>